<gene>
    <name evidence="1" type="primary">znuC</name>
    <name type="ordered locus">STM1892</name>
</gene>
<keyword id="KW-0067">ATP-binding</keyword>
<keyword id="KW-0997">Cell inner membrane</keyword>
<keyword id="KW-1003">Cell membrane</keyword>
<keyword id="KW-0406">Ion transport</keyword>
<keyword id="KW-0472">Membrane</keyword>
<keyword id="KW-0547">Nucleotide-binding</keyword>
<keyword id="KW-1185">Reference proteome</keyword>
<keyword id="KW-1278">Translocase</keyword>
<keyword id="KW-0813">Transport</keyword>
<keyword id="KW-0862">Zinc</keyword>
<keyword id="KW-0864">Zinc transport</keyword>
<feature type="chain" id="PRO_0000281549" description="Zinc import ATP-binding protein ZnuC">
    <location>
        <begin position="1"/>
        <end position="251"/>
    </location>
</feature>
<feature type="domain" description="ABC transporter" evidence="1">
    <location>
        <begin position="5"/>
        <end position="220"/>
    </location>
</feature>
<feature type="binding site" evidence="1">
    <location>
        <begin position="37"/>
        <end position="44"/>
    </location>
    <ligand>
        <name>ATP</name>
        <dbReference type="ChEBI" id="CHEBI:30616"/>
    </ligand>
</feature>
<dbReference type="EC" id="7.2.2.20" evidence="1"/>
<dbReference type="EMBL" id="AE006468">
    <property type="protein sequence ID" value="AAL20808.1"/>
    <property type="status" value="ALT_INIT"/>
    <property type="molecule type" value="Genomic_DNA"/>
</dbReference>
<dbReference type="RefSeq" id="NP_460849.3">
    <property type="nucleotide sequence ID" value="NC_003197.2"/>
</dbReference>
<dbReference type="RefSeq" id="WP_014343851.1">
    <property type="nucleotide sequence ID" value="NC_003197.2"/>
</dbReference>
<dbReference type="SMR" id="Q8ZNV7"/>
<dbReference type="STRING" id="99287.STM1892"/>
<dbReference type="PaxDb" id="99287-STM1892"/>
<dbReference type="GeneID" id="1253413"/>
<dbReference type="KEGG" id="stm:STM1892"/>
<dbReference type="PATRIC" id="fig|99287.12.peg.2006"/>
<dbReference type="HOGENOM" id="CLU_000604_1_11_6"/>
<dbReference type="OMA" id="GHDHVHP"/>
<dbReference type="PhylomeDB" id="Q8ZNV7"/>
<dbReference type="Proteomes" id="UP000001014">
    <property type="component" value="Chromosome"/>
</dbReference>
<dbReference type="GO" id="GO:0043190">
    <property type="term" value="C:ATP-binding cassette (ABC) transporter complex"/>
    <property type="evidence" value="ECO:0000318"/>
    <property type="project" value="GO_Central"/>
</dbReference>
<dbReference type="GO" id="GO:0015633">
    <property type="term" value="F:ABC-type zinc transporter activity"/>
    <property type="evidence" value="ECO:0007669"/>
    <property type="project" value="UniProtKB-EC"/>
</dbReference>
<dbReference type="GO" id="GO:0005524">
    <property type="term" value="F:ATP binding"/>
    <property type="evidence" value="ECO:0007669"/>
    <property type="project" value="UniProtKB-KW"/>
</dbReference>
<dbReference type="GO" id="GO:0016887">
    <property type="term" value="F:ATP hydrolysis activity"/>
    <property type="evidence" value="ECO:0007669"/>
    <property type="project" value="InterPro"/>
</dbReference>
<dbReference type="GO" id="GO:0042626">
    <property type="term" value="F:ATPase-coupled transmembrane transporter activity"/>
    <property type="evidence" value="ECO:0000318"/>
    <property type="project" value="GO_Central"/>
</dbReference>
<dbReference type="GO" id="GO:0010043">
    <property type="term" value="P:response to zinc ion"/>
    <property type="evidence" value="ECO:0000318"/>
    <property type="project" value="GO_Central"/>
</dbReference>
<dbReference type="CDD" id="cd03235">
    <property type="entry name" value="ABC_Metallic_Cations"/>
    <property type="match status" value="1"/>
</dbReference>
<dbReference type="FunFam" id="3.40.50.300:FF:000392">
    <property type="entry name" value="Zinc import ATP-binding protein ZnuC"/>
    <property type="match status" value="1"/>
</dbReference>
<dbReference type="Gene3D" id="3.40.50.300">
    <property type="entry name" value="P-loop containing nucleotide triphosphate hydrolases"/>
    <property type="match status" value="1"/>
</dbReference>
<dbReference type="InterPro" id="IPR003593">
    <property type="entry name" value="AAA+_ATPase"/>
</dbReference>
<dbReference type="InterPro" id="IPR003439">
    <property type="entry name" value="ABC_transporter-like_ATP-bd"/>
</dbReference>
<dbReference type="InterPro" id="IPR050153">
    <property type="entry name" value="Metal_Ion_Import_ABC"/>
</dbReference>
<dbReference type="InterPro" id="IPR027417">
    <property type="entry name" value="P-loop_NTPase"/>
</dbReference>
<dbReference type="NCBIfam" id="NF007090">
    <property type="entry name" value="PRK09544.1"/>
    <property type="match status" value="1"/>
</dbReference>
<dbReference type="PANTHER" id="PTHR42734">
    <property type="entry name" value="METAL TRANSPORT SYSTEM ATP-BINDING PROTEIN TM_0124-RELATED"/>
    <property type="match status" value="1"/>
</dbReference>
<dbReference type="PANTHER" id="PTHR42734:SF9">
    <property type="entry name" value="ZINC IMPORT ATP-BINDING PROTEIN ZNUC"/>
    <property type="match status" value="1"/>
</dbReference>
<dbReference type="Pfam" id="PF00005">
    <property type="entry name" value="ABC_tran"/>
    <property type="match status" value="1"/>
</dbReference>
<dbReference type="SMART" id="SM00382">
    <property type="entry name" value="AAA"/>
    <property type="match status" value="1"/>
</dbReference>
<dbReference type="SUPFAM" id="SSF52540">
    <property type="entry name" value="P-loop containing nucleoside triphosphate hydrolases"/>
    <property type="match status" value="1"/>
</dbReference>
<dbReference type="PROSITE" id="PS50893">
    <property type="entry name" value="ABC_TRANSPORTER_2"/>
    <property type="match status" value="1"/>
</dbReference>
<dbReference type="PROSITE" id="PS51298">
    <property type="entry name" value="ZNUC"/>
    <property type="match status" value="1"/>
</dbReference>
<organism>
    <name type="scientific">Salmonella typhimurium (strain LT2 / SGSC1412 / ATCC 700720)</name>
    <dbReference type="NCBI Taxonomy" id="99287"/>
    <lineage>
        <taxon>Bacteria</taxon>
        <taxon>Pseudomonadati</taxon>
        <taxon>Pseudomonadota</taxon>
        <taxon>Gammaproteobacteria</taxon>
        <taxon>Enterobacterales</taxon>
        <taxon>Enterobacteriaceae</taxon>
        <taxon>Salmonella</taxon>
    </lineage>
</organism>
<sequence>MTSLVSLENVSVSFGQRRVLSDVSLELSPGKILTLLGPNGAGKSTLVRVVLGLVAPDEGVIKHNGQLRIGYVPQKLYLDTTLPLTVNRFLRLRPGTQKTDILPALKRVQAGHLIDAPMQKLSGGETQRVLLARALLNRPQLLVLDEPTQGVDVNGQVALYDLIDQLRRELDCAVLMVSHDLHLVMAKTDEVLCLNHHICCSGAPEVVSMHPEFISMFGPRGAEQLGIYRHHHNHRHDLQGRIVLRRGNGHS</sequence>
<accession>Q8ZNV7</accession>
<comment type="function">
    <text evidence="1 2 3">Part of the ABC transporter complex ZnuABC involved in zinc import. Responsible for energy coupling to the transport system (Probable). Seems to be important for the virulence.</text>
</comment>
<comment type="catalytic activity">
    <reaction evidence="1">
        <text>Zn(2+)(out) + ATP(in) + H2O(in) = Zn(2+)(in) + ADP(in) + phosphate(in) + H(+)(in)</text>
        <dbReference type="Rhea" id="RHEA:29795"/>
        <dbReference type="ChEBI" id="CHEBI:15377"/>
        <dbReference type="ChEBI" id="CHEBI:15378"/>
        <dbReference type="ChEBI" id="CHEBI:29105"/>
        <dbReference type="ChEBI" id="CHEBI:30616"/>
        <dbReference type="ChEBI" id="CHEBI:43474"/>
        <dbReference type="ChEBI" id="CHEBI:456216"/>
        <dbReference type="EC" id="7.2.2.20"/>
    </reaction>
</comment>
<comment type="subunit">
    <text evidence="1">The complex is composed of two ATP-binding proteins (ZnuC), two transmembrane proteins (ZnuB) and a solute-binding protein (ZnuA).</text>
</comment>
<comment type="subcellular location">
    <subcellularLocation>
        <location evidence="1">Cell inner membrane</location>
        <topology evidence="1">Peripheral membrane protein</topology>
    </subcellularLocation>
</comment>
<comment type="induction">
    <text evidence="2">Transcriptionally repressed by zur (zinc uptake regulator), in response to high extracellular zinc concentrations.</text>
</comment>
<comment type="similarity">
    <text evidence="1">Belongs to the ABC transporter superfamily. Zinc importer (TC 3.A.1.15.5) family.</text>
</comment>
<comment type="sequence caution" evidence="3">
    <conflict type="erroneous initiation">
        <sequence resource="EMBL-CDS" id="AAL20808"/>
    </conflict>
</comment>
<reference key="1">
    <citation type="journal article" date="2001" name="Nature">
        <title>Complete genome sequence of Salmonella enterica serovar Typhimurium LT2.</title>
        <authorList>
            <person name="McClelland M."/>
            <person name="Sanderson K.E."/>
            <person name="Spieth J."/>
            <person name="Clifton S.W."/>
            <person name="Latreille P."/>
            <person name="Courtney L."/>
            <person name="Porwollik S."/>
            <person name="Ali J."/>
            <person name="Dante M."/>
            <person name="Du F."/>
            <person name="Hou S."/>
            <person name="Layman D."/>
            <person name="Leonard S."/>
            <person name="Nguyen C."/>
            <person name="Scott K."/>
            <person name="Holmes A."/>
            <person name="Grewal N."/>
            <person name="Mulvaney E."/>
            <person name="Ryan E."/>
            <person name="Sun H."/>
            <person name="Florea L."/>
            <person name="Miller W."/>
            <person name="Stoneking T."/>
            <person name="Nhan M."/>
            <person name="Waterston R."/>
            <person name="Wilson R.K."/>
        </authorList>
    </citation>
    <scope>NUCLEOTIDE SEQUENCE [LARGE SCALE GENOMIC DNA]</scope>
    <source>
        <strain>LT2 / SGSC1412 / ATCC 700720</strain>
    </source>
</reference>
<reference key="2">
    <citation type="journal article" date="2002" name="Infect. Immun.">
        <title>Role of the high-affinity zinc uptake znuABC system in Salmonella enterica serovar typhimurium virulence.</title>
        <authorList>
            <person name="Campoy S."/>
            <person name="Jara M."/>
            <person name="Busquets N."/>
            <person name="Perez De Rozas A.M."/>
            <person name="Badiola I."/>
            <person name="Barbe J."/>
        </authorList>
    </citation>
    <scope>FUNCTION</scope>
    <scope>INDUCTION</scope>
    <source>
        <strain>ATCC 14028 / SGSG 2980 / CDC 6516-60 / NCTC 12023</strain>
    </source>
</reference>
<protein>
    <recommendedName>
        <fullName evidence="1">Zinc import ATP-binding protein ZnuC</fullName>
        <ecNumber evidence="1">7.2.2.20</ecNumber>
    </recommendedName>
</protein>
<proteinExistence type="evidence at transcript level"/>
<evidence type="ECO:0000255" key="1">
    <source>
        <dbReference type="HAMAP-Rule" id="MF_01725"/>
    </source>
</evidence>
<evidence type="ECO:0000269" key="2">
    <source>
    </source>
</evidence>
<evidence type="ECO:0000305" key="3"/>
<name>ZNUC_SALTY</name>